<feature type="chain" id="PRO_0000368826" description="ATP synthase subunit b">
    <location>
        <begin position="1"/>
        <end position="173"/>
    </location>
</feature>
<feature type="transmembrane region" description="Helical" evidence="1">
    <location>
        <begin position="25"/>
        <end position="45"/>
    </location>
</feature>
<keyword id="KW-0066">ATP synthesis</keyword>
<keyword id="KW-0138">CF(0)</keyword>
<keyword id="KW-0375">Hydrogen ion transport</keyword>
<keyword id="KW-0406">Ion transport</keyword>
<keyword id="KW-0472">Membrane</keyword>
<keyword id="KW-1185">Reference proteome</keyword>
<keyword id="KW-0793">Thylakoid</keyword>
<keyword id="KW-0812">Transmembrane</keyword>
<keyword id="KW-1133">Transmembrane helix</keyword>
<keyword id="KW-0813">Transport</keyword>
<evidence type="ECO:0000255" key="1">
    <source>
        <dbReference type="HAMAP-Rule" id="MF_01398"/>
    </source>
</evidence>
<proteinExistence type="inferred from homology"/>
<dbReference type="EMBL" id="CP000435">
    <property type="protein sequence ID" value="ABI45579.1"/>
    <property type="molecule type" value="Genomic_DNA"/>
</dbReference>
<dbReference type="RefSeq" id="WP_011620224.1">
    <property type="nucleotide sequence ID" value="NC_008319.1"/>
</dbReference>
<dbReference type="SMR" id="Q0I7R0"/>
<dbReference type="STRING" id="64471.sync_2315"/>
<dbReference type="KEGG" id="syg:sync_2315"/>
<dbReference type="eggNOG" id="COG0711">
    <property type="taxonomic scope" value="Bacteria"/>
</dbReference>
<dbReference type="HOGENOM" id="CLU_079215_8_1_3"/>
<dbReference type="OrthoDB" id="461217at2"/>
<dbReference type="Proteomes" id="UP000001961">
    <property type="component" value="Chromosome"/>
</dbReference>
<dbReference type="GO" id="GO:0031676">
    <property type="term" value="C:plasma membrane-derived thylakoid membrane"/>
    <property type="evidence" value="ECO:0007669"/>
    <property type="project" value="UniProtKB-SubCell"/>
</dbReference>
<dbReference type="GO" id="GO:0045259">
    <property type="term" value="C:proton-transporting ATP synthase complex"/>
    <property type="evidence" value="ECO:0007669"/>
    <property type="project" value="UniProtKB-KW"/>
</dbReference>
<dbReference type="GO" id="GO:0046933">
    <property type="term" value="F:proton-transporting ATP synthase activity, rotational mechanism"/>
    <property type="evidence" value="ECO:0007669"/>
    <property type="project" value="UniProtKB-UniRule"/>
</dbReference>
<dbReference type="CDD" id="cd06503">
    <property type="entry name" value="ATP-synt_Fo_b"/>
    <property type="match status" value="1"/>
</dbReference>
<dbReference type="HAMAP" id="MF_01398">
    <property type="entry name" value="ATP_synth_b_bprime"/>
    <property type="match status" value="1"/>
</dbReference>
<dbReference type="InterPro" id="IPR002146">
    <property type="entry name" value="ATP_synth_b/b'su_bac/chlpt"/>
</dbReference>
<dbReference type="NCBIfam" id="NF005606">
    <property type="entry name" value="PRK07352.1"/>
    <property type="match status" value="1"/>
</dbReference>
<dbReference type="PANTHER" id="PTHR34264">
    <property type="entry name" value="ATP SYNTHASE SUBUNIT B, CHLOROPLASTIC"/>
    <property type="match status" value="1"/>
</dbReference>
<dbReference type="PANTHER" id="PTHR34264:SF3">
    <property type="entry name" value="ATP SYNTHASE SUBUNIT B, CHLOROPLASTIC"/>
    <property type="match status" value="1"/>
</dbReference>
<dbReference type="Pfam" id="PF00430">
    <property type="entry name" value="ATP-synt_B"/>
    <property type="match status" value="1"/>
</dbReference>
<comment type="function">
    <text evidence="1">F(1)F(0) ATP synthase produces ATP from ADP in the presence of a proton or sodium gradient. F-type ATPases consist of two structural domains, F(1) containing the extramembraneous catalytic core and F(0) containing the membrane proton channel, linked together by a central stalk and a peripheral stalk. During catalysis, ATP synthesis in the catalytic domain of F(1) is coupled via a rotary mechanism of the central stalk subunits to proton translocation.</text>
</comment>
<comment type="function">
    <text evidence="1">Component of the F(0) channel, it forms part of the peripheral stalk, linking F(1) to F(0).</text>
</comment>
<comment type="subunit">
    <text evidence="1">F-type ATPases have 2 components, F(1) - the catalytic core - and F(0) - the membrane proton channel. F(1) has five subunits: alpha(3), beta(3), gamma(1), delta(1), epsilon(1). F(0) has four main subunits: a(1), b(1), b'(1) and c(10-14). The alpha and beta chains form an alternating ring which encloses part of the gamma chain. F(1) is attached to F(0) by a central stalk formed by the gamma and epsilon chains, while a peripheral stalk is formed by the delta, b and b' chains.</text>
</comment>
<comment type="subcellular location">
    <subcellularLocation>
        <location evidence="1">Cellular thylakoid membrane</location>
        <topology evidence="1">Single-pass membrane protein</topology>
    </subcellularLocation>
</comment>
<comment type="similarity">
    <text evidence="1">Belongs to the ATPase B chain family.</text>
</comment>
<protein>
    <recommendedName>
        <fullName evidence="1">ATP synthase subunit b</fullName>
    </recommendedName>
    <alternativeName>
        <fullName evidence="1">ATP synthase F(0) sector subunit b</fullName>
    </alternativeName>
    <alternativeName>
        <fullName evidence="1">ATPase subunit I</fullName>
    </alternativeName>
    <alternativeName>
        <fullName evidence="1">F-type ATPase subunit b</fullName>
        <shortName evidence="1">F-ATPase subunit b</shortName>
    </alternativeName>
</protein>
<accession>Q0I7R0</accession>
<reference key="1">
    <citation type="journal article" date="2006" name="Proc. Natl. Acad. Sci. U.S.A.">
        <title>Genome sequence of Synechococcus CC9311: insights into adaptation to a coastal environment.</title>
        <authorList>
            <person name="Palenik B."/>
            <person name="Ren Q."/>
            <person name="Dupont C.L."/>
            <person name="Myers G.S."/>
            <person name="Heidelberg J.F."/>
            <person name="Badger J.H."/>
            <person name="Madupu R."/>
            <person name="Nelson W.C."/>
            <person name="Brinkac L.M."/>
            <person name="Dodson R.J."/>
            <person name="Durkin A.S."/>
            <person name="Daugherty S.C."/>
            <person name="Sullivan S.A."/>
            <person name="Khouri H."/>
            <person name="Mohamoud Y."/>
            <person name="Halpin R."/>
            <person name="Paulsen I.T."/>
        </authorList>
    </citation>
    <scope>NUCLEOTIDE SEQUENCE [LARGE SCALE GENOMIC DNA]</scope>
    <source>
        <strain>CC9311</strain>
    </source>
</reference>
<gene>
    <name evidence="1" type="primary">atpF</name>
    <name type="ordered locus">sync_2315</name>
</gene>
<organism>
    <name type="scientific">Synechococcus sp. (strain CC9311)</name>
    <dbReference type="NCBI Taxonomy" id="64471"/>
    <lineage>
        <taxon>Bacteria</taxon>
        <taxon>Bacillati</taxon>
        <taxon>Cyanobacteriota</taxon>
        <taxon>Cyanophyceae</taxon>
        <taxon>Synechococcales</taxon>
        <taxon>Synechococcaceae</taxon>
        <taxon>Synechococcus</taxon>
    </lineage>
</organism>
<sequence>MTLLFPLIASEGGFGINLNLFETNLINLVIVIGVLYWFLKGFLGGMLERRRETILKDLQDAEKRLKTATIELSKAQEELSAAQQKAEKIRLDGQARAEAIRADGEKRTIQAMAALKQDALADLTAEGARLTEQLRREAALSAIDKALAELPNRLDSKAQAKLIDSSISNLEDV</sequence>
<name>ATPF_SYNS3</name>